<feature type="peptide" id="PRO_0000044878" description="Mu-conotoxin GS">
    <location>
        <begin position="1"/>
        <end position="34"/>
    </location>
</feature>
<feature type="modified residue" description="4-hydroxyproline" evidence="1">
    <location>
        <position position="10"/>
    </location>
</feature>
<feature type="modified residue" description="4-hydroxyproline" evidence="1">
    <location>
        <position position="11"/>
    </location>
</feature>
<feature type="modified residue" description="4-carboxyglutamate" evidence="1">
    <location>
        <position position="32"/>
    </location>
</feature>
<feature type="disulfide bond" evidence="2">
    <location>
        <begin position="2"/>
        <end position="14"/>
    </location>
</feature>
<feature type="disulfide bond" evidence="2">
    <location>
        <begin position="9"/>
        <end position="19"/>
    </location>
</feature>
<feature type="disulfide bond" evidence="2">
    <location>
        <begin position="13"/>
        <end position="27"/>
    </location>
</feature>
<feature type="strand" evidence="3">
    <location>
        <begin position="9"/>
        <end position="11"/>
    </location>
</feature>
<feature type="strand" evidence="3">
    <location>
        <begin position="17"/>
        <end position="20"/>
    </location>
</feature>
<feature type="strand" evidence="3">
    <location>
        <begin position="22"/>
        <end position="24"/>
    </location>
</feature>
<feature type="strand" evidence="3">
    <location>
        <begin position="26"/>
        <end position="29"/>
    </location>
</feature>
<evidence type="ECO:0000269" key="1">
    <source>
    </source>
</evidence>
<evidence type="ECO:0000269" key="2">
    <source>
    </source>
</evidence>
<evidence type="ECO:0007829" key="3">
    <source>
        <dbReference type="PDB" id="1AG7"/>
    </source>
</evidence>
<organism>
    <name type="scientific">Conus geographus</name>
    <name type="common">Geography cone</name>
    <name type="synonym">Nubecula geographus</name>
    <dbReference type="NCBI Taxonomy" id="6491"/>
    <lineage>
        <taxon>Eukaryota</taxon>
        <taxon>Metazoa</taxon>
        <taxon>Spiralia</taxon>
        <taxon>Lophotrochozoa</taxon>
        <taxon>Mollusca</taxon>
        <taxon>Gastropoda</taxon>
        <taxon>Caenogastropoda</taxon>
        <taxon>Neogastropoda</taxon>
        <taxon>Conoidea</taxon>
        <taxon>Conidae</taxon>
        <taxon>Conus</taxon>
        <taxon>Gastridium</taxon>
    </lineage>
</organism>
<dbReference type="PIR" id="A31043">
    <property type="entry name" value="A31043"/>
</dbReference>
<dbReference type="PDB" id="1AG7">
    <property type="method" value="NMR"/>
    <property type="chains" value="A=1-34"/>
</dbReference>
<dbReference type="PDBsum" id="1AG7"/>
<dbReference type="SMR" id="P15472"/>
<dbReference type="ConoServer" id="1268">
    <property type="toxin name" value="conotoxin-GS"/>
</dbReference>
<dbReference type="EvolutionaryTrace" id="P15472"/>
<dbReference type="GO" id="GO:0005576">
    <property type="term" value="C:extracellular region"/>
    <property type="evidence" value="ECO:0007669"/>
    <property type="project" value="UniProtKB-SubCell"/>
</dbReference>
<dbReference type="GO" id="GO:0019871">
    <property type="term" value="F:sodium channel inhibitor activity"/>
    <property type="evidence" value="ECO:0007669"/>
    <property type="project" value="InterPro"/>
</dbReference>
<dbReference type="GO" id="GO:0090729">
    <property type="term" value="F:toxin activity"/>
    <property type="evidence" value="ECO:0007669"/>
    <property type="project" value="UniProtKB-KW"/>
</dbReference>
<dbReference type="InterPro" id="IPR012629">
    <property type="entry name" value="Conotoxin_TVIIAGS"/>
</dbReference>
<dbReference type="Pfam" id="PF08094">
    <property type="entry name" value="Toxin_24"/>
    <property type="match status" value="1"/>
</dbReference>
<dbReference type="SUPFAM" id="SSF57059">
    <property type="entry name" value="omega toxin-like"/>
    <property type="match status" value="1"/>
</dbReference>
<comment type="function">
    <text evidence="1">Mu-conotoxins block voltage-gated sodium channels (Nav). No effect was observed upon injections into mice and goldfish (25 ug).</text>
</comment>
<comment type="subcellular location">
    <subcellularLocation>
        <location>Secreted</location>
    </subcellularLocation>
</comment>
<comment type="tissue specificity">
    <text>Expressed by the venom duct.</text>
</comment>
<comment type="domain">
    <text>The presence of a 'disulfide through disulfide knot' structurally defines this protein as a knottin.</text>
</comment>
<comment type="domain">
    <text>The cysteine framework is VI/VII (C-C-CC-C-C).</text>
</comment>
<accession>P15472</accession>
<name>U6GS_CONGE</name>
<proteinExistence type="evidence at protein level"/>
<protein>
    <recommendedName>
        <fullName>Mu-conotoxin GS</fullName>
        <shortName>CGS</shortName>
    </recommendedName>
</protein>
<reference key="1">
    <citation type="journal article" date="1988" name="Biochemistry">
        <title>A novel sodium channel inhibitor from Conus geographus: purification, structure, and pharmacological properties.</title>
        <authorList>
            <person name="Yanagawa Y."/>
            <person name="Abe T."/>
            <person name="Satake M."/>
            <person name="Odani S."/>
            <person name="Suzuki J."/>
            <person name="Ishikawa K."/>
        </authorList>
    </citation>
    <scope>PROTEIN SEQUENCE</scope>
    <scope>HYDROXYLATION AT PRO-10 AND PRO-11</scope>
    <scope>GAMMA-CARBOXYGLUTAMATION AT GLU-32</scope>
    <scope>FUNCTION</scope>
</reference>
<reference key="2">
    <citation type="journal article" date="1997" name="Structure">
        <title>Solution structure of the sodium channel antagonist conotoxin GS: a new molecular caliper for probing sodium channel geometry.</title>
        <authorList>
            <person name="Hill J.M."/>
            <person name="Alewood P.F."/>
            <person name="Craik D.J."/>
        </authorList>
    </citation>
    <scope>STRUCTURE BY NMR</scope>
    <scope>DISULFIDE BONDS</scope>
</reference>
<sequence length="34" mass="3548">ACSGRGSRCPPQCCMGLRCGRGNPQKCIGAHEDV</sequence>
<keyword id="KW-0002">3D-structure</keyword>
<keyword id="KW-0903">Direct protein sequencing</keyword>
<keyword id="KW-1015">Disulfide bond</keyword>
<keyword id="KW-0301">Gamma-carboxyglutamic acid</keyword>
<keyword id="KW-0379">Hydroxylation</keyword>
<keyword id="KW-0872">Ion channel impairing toxin</keyword>
<keyword id="KW-0960">Knottin</keyword>
<keyword id="KW-0528">Neurotoxin</keyword>
<keyword id="KW-0964">Secreted</keyword>
<keyword id="KW-0800">Toxin</keyword>
<keyword id="KW-0738">Voltage-gated sodium channel impairing toxin</keyword>